<organism>
    <name type="scientific">Mus musculus</name>
    <name type="common">Mouse</name>
    <dbReference type="NCBI Taxonomy" id="10090"/>
    <lineage>
        <taxon>Eukaryota</taxon>
        <taxon>Metazoa</taxon>
        <taxon>Chordata</taxon>
        <taxon>Craniata</taxon>
        <taxon>Vertebrata</taxon>
        <taxon>Euteleostomi</taxon>
        <taxon>Mammalia</taxon>
        <taxon>Eutheria</taxon>
        <taxon>Euarchontoglires</taxon>
        <taxon>Glires</taxon>
        <taxon>Rodentia</taxon>
        <taxon>Myomorpha</taxon>
        <taxon>Muroidea</taxon>
        <taxon>Muridae</taxon>
        <taxon>Murinae</taxon>
        <taxon>Mus</taxon>
        <taxon>Mus</taxon>
    </lineage>
</organism>
<keyword id="KW-0175">Coiled coil</keyword>
<keyword id="KW-0479">Metal-binding</keyword>
<keyword id="KW-1185">Reference proteome</keyword>
<keyword id="KW-0862">Zinc</keyword>
<keyword id="KW-0863">Zinc-finger</keyword>
<feature type="chain" id="PRO_0000249190" description="E3 SUMO-protein ligase TRIM60">
    <location>
        <begin position="1"/>
        <end position="466"/>
    </location>
</feature>
<feature type="domain" description="B30.2/SPRY" evidence="4">
    <location>
        <begin position="272"/>
        <end position="462"/>
    </location>
</feature>
<feature type="zinc finger region" description="RING-type" evidence="3">
    <location>
        <begin position="15"/>
        <end position="56"/>
    </location>
</feature>
<feature type="zinc finger region" description="B box-type" evidence="2">
    <location>
        <begin position="91"/>
        <end position="132"/>
    </location>
</feature>
<feature type="coiled-coil region" evidence="1">
    <location>
        <begin position="171"/>
        <end position="223"/>
    </location>
</feature>
<feature type="binding site" evidence="2">
    <location>
        <position position="96"/>
    </location>
    <ligand>
        <name>Zn(2+)</name>
        <dbReference type="ChEBI" id="CHEBI:29105"/>
    </ligand>
</feature>
<feature type="binding site" evidence="2">
    <location>
        <position position="99"/>
    </location>
    <ligand>
        <name>Zn(2+)</name>
        <dbReference type="ChEBI" id="CHEBI:29105"/>
    </ligand>
</feature>
<feature type="binding site" evidence="2">
    <location>
        <position position="118"/>
    </location>
    <ligand>
        <name>Zn(2+)</name>
        <dbReference type="ChEBI" id="CHEBI:29105"/>
    </ligand>
</feature>
<feature type="binding site" evidence="2">
    <location>
        <position position="124"/>
    </location>
    <ligand>
        <name>Zn(2+)</name>
        <dbReference type="ChEBI" id="CHEBI:29105"/>
    </ligand>
</feature>
<feature type="sequence conflict" description="In Ref. 3; BAE22689." evidence="7" ref="3">
    <original>V</original>
    <variation>F</variation>
    <location>
        <position position="226"/>
    </location>
</feature>
<evidence type="ECO:0000255" key="1"/>
<evidence type="ECO:0000255" key="2">
    <source>
        <dbReference type="PROSITE-ProRule" id="PRU00024"/>
    </source>
</evidence>
<evidence type="ECO:0000255" key="3">
    <source>
        <dbReference type="PROSITE-ProRule" id="PRU00175"/>
    </source>
</evidence>
<evidence type="ECO:0000255" key="4">
    <source>
        <dbReference type="PROSITE-ProRule" id="PRU00548"/>
    </source>
</evidence>
<evidence type="ECO:0000269" key="5">
    <source>
    </source>
</evidence>
<evidence type="ECO:0000269" key="6">
    <source>
    </source>
</evidence>
<evidence type="ECO:0000305" key="7"/>
<sequence length="466" mass="54199">MDSTALKILQDKCICYICSDFMEDPVTSRCGHNFCFACLRLLWDDLQGNIFCPVCQTPFPPKSFSRNYQFRNMTETIRLLQKRQSKRKRQEEHTVCPKHDQPLVLFCVRDRDVLCTQCSLSVEHQGHYTCPIKKASSYHRKVLESAIATLKFGVKQVEEKLAVQHRRVLGLREEAQYQKIEIRYEIGQIKLFLQSEYEAHLNESHMEELRSFSELNGYLETLLDHVSTAKDLLKEVEAIHERSDVTLLRAYHKLQNLKSPKPWLFRTKQYGLSLPAQYSGLSRIIKQFQADVTFDRDTAHPQLVISEDRKSVFYKEAWPCVCASPQKFHLWPALLGCKGFDSGRQYWEVKVGDKPRWTLGVCQAHFSGDWSNQSSGFWAIGRYAENSYVTYGPLRTEFLPVVRPSKVGIFLDYELGELSFYNMNDRSLLYTFRNSFTSTLWPYFYIGTDSESLEILTHPTPDTGSY</sequence>
<protein>
    <recommendedName>
        <fullName>E3 SUMO-protein ligase TRIM60</fullName>
    </recommendedName>
    <alternativeName>
        <fullName>RING finger protein 33</fullName>
    </alternativeName>
</protein>
<proteinExistence type="evidence at protein level"/>
<name>TRI60_MOUSE</name>
<dbReference type="EMBL" id="AF290197">
    <property type="protein sequence ID" value="AAL40186.1"/>
    <property type="molecule type" value="mRNA"/>
</dbReference>
<dbReference type="EMBL" id="AY063497">
    <property type="protein sequence ID" value="AAL58549.1"/>
    <property type="molecule type" value="Genomic_DNA"/>
</dbReference>
<dbReference type="EMBL" id="AK135841">
    <property type="protein sequence ID" value="BAE22689.1"/>
    <property type="molecule type" value="mRNA"/>
</dbReference>
<dbReference type="CCDS" id="CCDS22331.1"/>
<dbReference type="RefSeq" id="NP_694737.1">
    <property type="nucleotide sequence ID" value="NM_153097.2"/>
</dbReference>
<dbReference type="SMR" id="Q8VI40"/>
<dbReference type="FunCoup" id="Q8VI40">
    <property type="interactions" value="28"/>
</dbReference>
<dbReference type="IntAct" id="Q8VI40">
    <property type="interactions" value="2"/>
</dbReference>
<dbReference type="STRING" id="10090.ENSMUSP00000040299"/>
<dbReference type="iPTMnet" id="Q8VI40"/>
<dbReference type="PhosphoSitePlus" id="Q8VI40"/>
<dbReference type="PaxDb" id="10090-ENSMUSP00000040299"/>
<dbReference type="Antibodypedia" id="28289">
    <property type="antibodies" value="47 antibodies from 15 providers"/>
</dbReference>
<dbReference type="DNASU" id="234329"/>
<dbReference type="Ensembl" id="ENSMUST00000048565.9">
    <property type="protein sequence ID" value="ENSMUSP00000040299.8"/>
    <property type="gene ID" value="ENSMUSG00000053490.9"/>
</dbReference>
<dbReference type="GeneID" id="234329"/>
<dbReference type="KEGG" id="mmu:234329"/>
<dbReference type="UCSC" id="uc009lve.2">
    <property type="organism name" value="mouse"/>
</dbReference>
<dbReference type="AGR" id="MGI:2387430"/>
<dbReference type="CTD" id="166655"/>
<dbReference type="MGI" id="MGI:2387430">
    <property type="gene designation" value="Trim60"/>
</dbReference>
<dbReference type="VEuPathDB" id="HostDB:ENSMUSG00000053490"/>
<dbReference type="eggNOG" id="KOG2177">
    <property type="taxonomic scope" value="Eukaryota"/>
</dbReference>
<dbReference type="GeneTree" id="ENSGT00940000155329"/>
<dbReference type="HOGENOM" id="CLU_013137_0_3_1"/>
<dbReference type="InParanoid" id="Q8VI40"/>
<dbReference type="OMA" id="GNKPKWT"/>
<dbReference type="OrthoDB" id="128536at2759"/>
<dbReference type="PhylomeDB" id="Q8VI40"/>
<dbReference type="TreeFam" id="TF342569"/>
<dbReference type="BioGRID-ORCS" id="234329">
    <property type="hits" value="3 hits in 78 CRISPR screens"/>
</dbReference>
<dbReference type="ChiTaRS" id="Trim60">
    <property type="organism name" value="mouse"/>
</dbReference>
<dbReference type="PRO" id="PR:Q8VI40"/>
<dbReference type="Proteomes" id="UP000000589">
    <property type="component" value="Chromosome 8"/>
</dbReference>
<dbReference type="RNAct" id="Q8VI40">
    <property type="molecule type" value="protein"/>
</dbReference>
<dbReference type="Bgee" id="ENSMUSG00000053490">
    <property type="expression patterns" value="Expressed in animal zygote and 21 other cell types or tissues"/>
</dbReference>
<dbReference type="GO" id="GO:0140082">
    <property type="term" value="F:SUMO-ubiquitin ligase activity"/>
    <property type="evidence" value="ECO:0007669"/>
    <property type="project" value="Ensembl"/>
</dbReference>
<dbReference type="GO" id="GO:0008270">
    <property type="term" value="F:zinc ion binding"/>
    <property type="evidence" value="ECO:0007669"/>
    <property type="project" value="UniProtKB-KW"/>
</dbReference>
<dbReference type="GO" id="GO:1901223">
    <property type="term" value="P:negative regulation of non-canonical NF-kappaB signal transduction"/>
    <property type="evidence" value="ECO:0007669"/>
    <property type="project" value="Ensembl"/>
</dbReference>
<dbReference type="CDD" id="cd16543">
    <property type="entry name" value="RING-HC_TRIM77_C-IV"/>
    <property type="match status" value="1"/>
</dbReference>
<dbReference type="CDD" id="cd15828">
    <property type="entry name" value="SPRY_PRY_TRIM60"/>
    <property type="match status" value="1"/>
</dbReference>
<dbReference type="FunFam" id="2.60.120.920:FF:000004">
    <property type="entry name" value="Butyrophilin subfamily 1 member A1"/>
    <property type="match status" value="1"/>
</dbReference>
<dbReference type="Gene3D" id="2.60.120.920">
    <property type="match status" value="1"/>
</dbReference>
<dbReference type="Gene3D" id="3.30.160.60">
    <property type="entry name" value="Classic Zinc Finger"/>
    <property type="match status" value="1"/>
</dbReference>
<dbReference type="Gene3D" id="3.30.40.10">
    <property type="entry name" value="Zinc/RING finger domain, C3HC4 (zinc finger)"/>
    <property type="match status" value="1"/>
</dbReference>
<dbReference type="InterPro" id="IPR001870">
    <property type="entry name" value="B30.2/SPRY"/>
</dbReference>
<dbReference type="InterPro" id="IPR043136">
    <property type="entry name" value="B30.2/SPRY_sf"/>
</dbReference>
<dbReference type="InterPro" id="IPR003879">
    <property type="entry name" value="Butyrophylin_SPRY"/>
</dbReference>
<dbReference type="InterPro" id="IPR013320">
    <property type="entry name" value="ConA-like_dom_sf"/>
</dbReference>
<dbReference type="InterPro" id="IPR006574">
    <property type="entry name" value="PRY"/>
</dbReference>
<dbReference type="InterPro" id="IPR035786">
    <property type="entry name" value="SPRY/PRY_TRIM60"/>
</dbReference>
<dbReference type="InterPro" id="IPR003877">
    <property type="entry name" value="SPRY_dom"/>
</dbReference>
<dbReference type="InterPro" id="IPR050143">
    <property type="entry name" value="TRIM/RBCC"/>
</dbReference>
<dbReference type="InterPro" id="IPR000315">
    <property type="entry name" value="Znf_B-box"/>
</dbReference>
<dbReference type="InterPro" id="IPR001841">
    <property type="entry name" value="Znf_RING"/>
</dbReference>
<dbReference type="InterPro" id="IPR013083">
    <property type="entry name" value="Znf_RING/FYVE/PHD"/>
</dbReference>
<dbReference type="InterPro" id="IPR017907">
    <property type="entry name" value="Znf_RING_CS"/>
</dbReference>
<dbReference type="PANTHER" id="PTHR24103">
    <property type="entry name" value="E3 UBIQUITIN-PROTEIN LIGASE TRIM"/>
    <property type="match status" value="1"/>
</dbReference>
<dbReference type="Pfam" id="PF13765">
    <property type="entry name" value="PRY"/>
    <property type="match status" value="1"/>
</dbReference>
<dbReference type="Pfam" id="PF00622">
    <property type="entry name" value="SPRY"/>
    <property type="match status" value="1"/>
</dbReference>
<dbReference type="Pfam" id="PF00643">
    <property type="entry name" value="zf-B_box"/>
    <property type="match status" value="1"/>
</dbReference>
<dbReference type="Pfam" id="PF15227">
    <property type="entry name" value="zf-C3HC4_4"/>
    <property type="match status" value="1"/>
</dbReference>
<dbReference type="PRINTS" id="PR01407">
    <property type="entry name" value="BUTYPHLNCDUF"/>
</dbReference>
<dbReference type="SMART" id="SM00336">
    <property type="entry name" value="BBOX"/>
    <property type="match status" value="1"/>
</dbReference>
<dbReference type="SMART" id="SM00589">
    <property type="entry name" value="PRY"/>
    <property type="match status" value="1"/>
</dbReference>
<dbReference type="SMART" id="SM00184">
    <property type="entry name" value="RING"/>
    <property type="match status" value="1"/>
</dbReference>
<dbReference type="SMART" id="SM00449">
    <property type="entry name" value="SPRY"/>
    <property type="match status" value="1"/>
</dbReference>
<dbReference type="SUPFAM" id="SSF57845">
    <property type="entry name" value="B-box zinc-binding domain"/>
    <property type="match status" value="1"/>
</dbReference>
<dbReference type="SUPFAM" id="SSF49899">
    <property type="entry name" value="Concanavalin A-like lectins/glucanases"/>
    <property type="match status" value="1"/>
</dbReference>
<dbReference type="SUPFAM" id="SSF57850">
    <property type="entry name" value="RING/U-box"/>
    <property type="match status" value="1"/>
</dbReference>
<dbReference type="PROSITE" id="PS50188">
    <property type="entry name" value="B302_SPRY"/>
    <property type="match status" value="1"/>
</dbReference>
<dbReference type="PROSITE" id="PS50119">
    <property type="entry name" value="ZF_BBOX"/>
    <property type="match status" value="1"/>
</dbReference>
<dbReference type="PROSITE" id="PS00518">
    <property type="entry name" value="ZF_RING_1"/>
    <property type="match status" value="1"/>
</dbReference>
<dbReference type="PROSITE" id="PS50089">
    <property type="entry name" value="ZF_RING_2"/>
    <property type="match status" value="1"/>
</dbReference>
<reference key="1">
    <citation type="journal article" date="2001" name="Mol. Reprod. Dev.">
        <title>In silico mining of EST databases for novel pre-implantation embryo-specific zinc finger protein genes.</title>
        <authorList>
            <person name="Choo K.-B."/>
            <person name="Chen H.-H."/>
            <person name="Cheng W.T.K."/>
            <person name="Chang H.-S."/>
            <person name="Wang M."/>
        </authorList>
    </citation>
    <scope>NUCLEOTIDE SEQUENCE [MRNA]</scope>
    <scope>DEVELOPMENTAL STAGE</scope>
    <source>
        <strain>C57BL/6J X DBA/2</strain>
    </source>
</reference>
<reference key="2">
    <citation type="journal article" date="2002" name="Genomics">
        <title>Use of a common promoter by two juxtaposed and intronless mouse early embryonic genes, Rnf33 and Rnf35: implications in zygotic gene expression.</title>
        <authorList>
            <person name="Chen H.-H."/>
            <person name="Liu T.Y.-C."/>
            <person name="Li H."/>
            <person name="Choo K.-B."/>
        </authorList>
    </citation>
    <scope>NUCLEOTIDE SEQUENCE [GENOMIC DNA]</scope>
    <source>
        <strain>129/SvJ</strain>
    </source>
</reference>
<reference key="3">
    <citation type="journal article" date="2005" name="Science">
        <title>The transcriptional landscape of the mammalian genome.</title>
        <authorList>
            <person name="Carninci P."/>
            <person name="Kasukawa T."/>
            <person name="Katayama S."/>
            <person name="Gough J."/>
            <person name="Frith M.C."/>
            <person name="Maeda N."/>
            <person name="Oyama R."/>
            <person name="Ravasi T."/>
            <person name="Lenhard B."/>
            <person name="Wells C."/>
            <person name="Kodzius R."/>
            <person name="Shimokawa K."/>
            <person name="Bajic V.B."/>
            <person name="Brenner S.E."/>
            <person name="Batalov S."/>
            <person name="Forrest A.R."/>
            <person name="Zavolan M."/>
            <person name="Davis M.J."/>
            <person name="Wilming L.G."/>
            <person name="Aidinis V."/>
            <person name="Allen J.E."/>
            <person name="Ambesi-Impiombato A."/>
            <person name="Apweiler R."/>
            <person name="Aturaliya R.N."/>
            <person name="Bailey T.L."/>
            <person name="Bansal M."/>
            <person name="Baxter L."/>
            <person name="Beisel K.W."/>
            <person name="Bersano T."/>
            <person name="Bono H."/>
            <person name="Chalk A.M."/>
            <person name="Chiu K.P."/>
            <person name="Choudhary V."/>
            <person name="Christoffels A."/>
            <person name="Clutterbuck D.R."/>
            <person name="Crowe M.L."/>
            <person name="Dalla E."/>
            <person name="Dalrymple B.P."/>
            <person name="de Bono B."/>
            <person name="Della Gatta G."/>
            <person name="di Bernardo D."/>
            <person name="Down T."/>
            <person name="Engstrom P."/>
            <person name="Fagiolini M."/>
            <person name="Faulkner G."/>
            <person name="Fletcher C.F."/>
            <person name="Fukushima T."/>
            <person name="Furuno M."/>
            <person name="Futaki S."/>
            <person name="Gariboldi M."/>
            <person name="Georgii-Hemming P."/>
            <person name="Gingeras T.R."/>
            <person name="Gojobori T."/>
            <person name="Green R.E."/>
            <person name="Gustincich S."/>
            <person name="Harbers M."/>
            <person name="Hayashi Y."/>
            <person name="Hensch T.K."/>
            <person name="Hirokawa N."/>
            <person name="Hill D."/>
            <person name="Huminiecki L."/>
            <person name="Iacono M."/>
            <person name="Ikeo K."/>
            <person name="Iwama A."/>
            <person name="Ishikawa T."/>
            <person name="Jakt M."/>
            <person name="Kanapin A."/>
            <person name="Katoh M."/>
            <person name="Kawasawa Y."/>
            <person name="Kelso J."/>
            <person name="Kitamura H."/>
            <person name="Kitano H."/>
            <person name="Kollias G."/>
            <person name="Krishnan S.P."/>
            <person name="Kruger A."/>
            <person name="Kummerfeld S.K."/>
            <person name="Kurochkin I.V."/>
            <person name="Lareau L.F."/>
            <person name="Lazarevic D."/>
            <person name="Lipovich L."/>
            <person name="Liu J."/>
            <person name="Liuni S."/>
            <person name="McWilliam S."/>
            <person name="Madan Babu M."/>
            <person name="Madera M."/>
            <person name="Marchionni L."/>
            <person name="Matsuda H."/>
            <person name="Matsuzawa S."/>
            <person name="Miki H."/>
            <person name="Mignone F."/>
            <person name="Miyake S."/>
            <person name="Morris K."/>
            <person name="Mottagui-Tabar S."/>
            <person name="Mulder N."/>
            <person name="Nakano N."/>
            <person name="Nakauchi H."/>
            <person name="Ng P."/>
            <person name="Nilsson R."/>
            <person name="Nishiguchi S."/>
            <person name="Nishikawa S."/>
            <person name="Nori F."/>
            <person name="Ohara O."/>
            <person name="Okazaki Y."/>
            <person name="Orlando V."/>
            <person name="Pang K.C."/>
            <person name="Pavan W.J."/>
            <person name="Pavesi G."/>
            <person name="Pesole G."/>
            <person name="Petrovsky N."/>
            <person name="Piazza S."/>
            <person name="Reed J."/>
            <person name="Reid J.F."/>
            <person name="Ring B.Z."/>
            <person name="Ringwald M."/>
            <person name="Rost B."/>
            <person name="Ruan Y."/>
            <person name="Salzberg S.L."/>
            <person name="Sandelin A."/>
            <person name="Schneider C."/>
            <person name="Schoenbach C."/>
            <person name="Sekiguchi K."/>
            <person name="Semple C.A."/>
            <person name="Seno S."/>
            <person name="Sessa L."/>
            <person name="Sheng Y."/>
            <person name="Shibata Y."/>
            <person name="Shimada H."/>
            <person name="Shimada K."/>
            <person name="Silva D."/>
            <person name="Sinclair B."/>
            <person name="Sperling S."/>
            <person name="Stupka E."/>
            <person name="Sugiura K."/>
            <person name="Sultana R."/>
            <person name="Takenaka Y."/>
            <person name="Taki K."/>
            <person name="Tammoja K."/>
            <person name="Tan S.L."/>
            <person name="Tang S."/>
            <person name="Taylor M.S."/>
            <person name="Tegner J."/>
            <person name="Teichmann S.A."/>
            <person name="Ueda H.R."/>
            <person name="van Nimwegen E."/>
            <person name="Verardo R."/>
            <person name="Wei C.L."/>
            <person name="Yagi K."/>
            <person name="Yamanishi H."/>
            <person name="Zabarovsky E."/>
            <person name="Zhu S."/>
            <person name="Zimmer A."/>
            <person name="Hide W."/>
            <person name="Bult C."/>
            <person name="Grimmond S.M."/>
            <person name="Teasdale R.D."/>
            <person name="Liu E.T."/>
            <person name="Brusic V."/>
            <person name="Quackenbush J."/>
            <person name="Wahlestedt C."/>
            <person name="Mattick J.S."/>
            <person name="Hume D.A."/>
            <person name="Kai C."/>
            <person name="Sasaki D."/>
            <person name="Tomaru Y."/>
            <person name="Fukuda S."/>
            <person name="Kanamori-Katayama M."/>
            <person name="Suzuki M."/>
            <person name="Aoki J."/>
            <person name="Arakawa T."/>
            <person name="Iida J."/>
            <person name="Imamura K."/>
            <person name="Itoh M."/>
            <person name="Kato T."/>
            <person name="Kawaji H."/>
            <person name="Kawagashira N."/>
            <person name="Kawashima T."/>
            <person name="Kojima M."/>
            <person name="Kondo S."/>
            <person name="Konno H."/>
            <person name="Nakano K."/>
            <person name="Ninomiya N."/>
            <person name="Nishio T."/>
            <person name="Okada M."/>
            <person name="Plessy C."/>
            <person name="Shibata K."/>
            <person name="Shiraki T."/>
            <person name="Suzuki S."/>
            <person name="Tagami M."/>
            <person name="Waki K."/>
            <person name="Watahiki A."/>
            <person name="Okamura-Oho Y."/>
            <person name="Suzuki H."/>
            <person name="Kawai J."/>
            <person name="Hayashizaki Y."/>
        </authorList>
    </citation>
    <scope>NUCLEOTIDE SEQUENCE [LARGE SCALE MRNA]</scope>
    <source>
        <strain>C57BL/6J</strain>
    </source>
</reference>
<reference key="4">
    <citation type="journal article" date="2021" name="Cell. Mol. Immunol.">
        <title>The SUMOylation of TAB2 mediated by TRIM60 inhibits MAPK/NF-kappaB activation and the innate immune response.</title>
        <authorList>
            <person name="Gu Z."/>
            <person name="Chen X."/>
            <person name="Yang W."/>
            <person name="Qi Y."/>
            <person name="Yu H."/>
            <person name="Wang X."/>
            <person name="Gong Y."/>
            <person name="Chen Q."/>
            <person name="Zhong B."/>
            <person name="Dai L."/>
            <person name="Qi S."/>
            <person name="Zhang Z."/>
            <person name="Zhang H."/>
            <person name="Hu H."/>
        </authorList>
    </citation>
    <scope>FUNCTION</scope>
    <scope>DISRUPTION PHENOTYPE</scope>
</reference>
<accession>Q8VI40</accession>
<accession>Q3UX74</accession>
<comment type="function">
    <text evidence="6">E3 SUMO-protein ligase that mediates SUMOylation of TAB2 leading to inhibition of NF-kappa-B and MAPK pathways by suppressing the TRAF6/TAB2/TAK1 complex.</text>
</comment>
<comment type="interaction">
    <interactant intactId="EBI-6395249">
        <id>Q8VI40</id>
    </interactant>
    <interactant intactId="EBI-6169413">
        <id>P28741</id>
        <label>Kif3a</label>
    </interactant>
    <organismsDiffer>false</organismsDiffer>
    <experiments>5</experiments>
</comment>
<comment type="interaction">
    <interactant intactId="EBI-6395249">
        <id>Q8VI40</id>
    </interactant>
    <interactant intactId="EBI-6395332">
        <id>Q61771</id>
        <label>Kif3b</label>
    </interactant>
    <organismsDiffer>false</organismsDiffer>
    <experiments>3</experiments>
</comment>
<comment type="developmental stage">
    <text evidence="5">Expressed exclusively in embryos before or up to the 8-cell stage.</text>
</comment>
<comment type="disruption phenotype">
    <text evidence="6">TRIM60-deficient mice show an elevated immune response to LPS-induced septic shock and L.monocytogenes infection.</text>
</comment>
<comment type="similarity">
    <text evidence="7">Belongs to the TRIM/RBCC family.</text>
</comment>
<gene>
    <name type="primary">Trim60</name>
    <name type="synonym">2czf45</name>
    <name type="synonym">Rnf33</name>
</gene>